<name>FK122_ARATH</name>
<protein>
    <recommendedName>
        <fullName>F-box/kelch-repeat protein At5g49000</fullName>
    </recommendedName>
</protein>
<organism>
    <name type="scientific">Arabidopsis thaliana</name>
    <name type="common">Mouse-ear cress</name>
    <dbReference type="NCBI Taxonomy" id="3702"/>
    <lineage>
        <taxon>Eukaryota</taxon>
        <taxon>Viridiplantae</taxon>
        <taxon>Streptophyta</taxon>
        <taxon>Embryophyta</taxon>
        <taxon>Tracheophyta</taxon>
        <taxon>Spermatophyta</taxon>
        <taxon>Magnoliopsida</taxon>
        <taxon>eudicotyledons</taxon>
        <taxon>Gunneridae</taxon>
        <taxon>Pentapetalae</taxon>
        <taxon>rosids</taxon>
        <taxon>malvids</taxon>
        <taxon>Brassicales</taxon>
        <taxon>Brassicaceae</taxon>
        <taxon>Camelineae</taxon>
        <taxon>Arabidopsis</taxon>
    </lineage>
</organism>
<proteinExistence type="evidence at transcript level"/>
<keyword id="KW-0025">Alternative splicing</keyword>
<keyword id="KW-0880">Kelch repeat</keyword>
<keyword id="KW-1185">Reference proteome</keyword>
<keyword id="KW-0677">Repeat</keyword>
<reference key="1">
    <citation type="journal article" date="1999" name="DNA Res.">
        <title>Structural analysis of Arabidopsis thaliana chromosome 5. IX. Sequence features of the regions of 1,011,550 bp covered by seventeen P1 and TAC clones.</title>
        <authorList>
            <person name="Kaneko T."/>
            <person name="Katoh T."/>
            <person name="Sato S."/>
            <person name="Nakamura Y."/>
            <person name="Asamizu E."/>
            <person name="Kotani H."/>
            <person name="Miyajima N."/>
            <person name="Tabata S."/>
        </authorList>
    </citation>
    <scope>NUCLEOTIDE SEQUENCE [LARGE SCALE GENOMIC DNA]</scope>
    <source>
        <strain>cv. Columbia</strain>
    </source>
</reference>
<reference key="2">
    <citation type="journal article" date="2017" name="Plant J.">
        <title>Araport11: a complete reannotation of the Arabidopsis thaliana reference genome.</title>
        <authorList>
            <person name="Cheng C.Y."/>
            <person name="Krishnakumar V."/>
            <person name="Chan A.P."/>
            <person name="Thibaud-Nissen F."/>
            <person name="Schobel S."/>
            <person name="Town C.D."/>
        </authorList>
    </citation>
    <scope>GENOME REANNOTATION</scope>
    <source>
        <strain>cv. Columbia</strain>
    </source>
</reference>
<reference key="3">
    <citation type="journal article" date="2002" name="Science">
        <title>Functional annotation of a full-length Arabidopsis cDNA collection.</title>
        <authorList>
            <person name="Seki M."/>
            <person name="Narusaka M."/>
            <person name="Kamiya A."/>
            <person name="Ishida J."/>
            <person name="Satou M."/>
            <person name="Sakurai T."/>
            <person name="Nakajima M."/>
            <person name="Enju A."/>
            <person name="Akiyama K."/>
            <person name="Oono Y."/>
            <person name="Muramatsu M."/>
            <person name="Hayashizaki Y."/>
            <person name="Kawai J."/>
            <person name="Carninci P."/>
            <person name="Itoh M."/>
            <person name="Ishii Y."/>
            <person name="Arakawa T."/>
            <person name="Shibata K."/>
            <person name="Shinagawa A."/>
            <person name="Shinozaki K."/>
        </authorList>
    </citation>
    <scope>NUCLEOTIDE SEQUENCE [LARGE SCALE MRNA] (ISOFORM 2)</scope>
    <source>
        <strain>cv. Columbia</strain>
    </source>
</reference>
<reference key="4">
    <citation type="submission" date="2006-12" db="EMBL/GenBank/DDBJ databases">
        <title>Arabidopsis ORF clones.</title>
        <authorList>
            <person name="Bautista V.R."/>
            <person name="Kim C.J."/>
            <person name="Chen H."/>
            <person name="Quinitio C."/>
            <person name="Ecker J.R."/>
        </authorList>
    </citation>
    <scope>NUCLEOTIDE SEQUENCE [LARGE SCALE MRNA] (ISOFORM 1)</scope>
    <source>
        <strain>cv. Columbia</strain>
    </source>
</reference>
<dbReference type="EMBL" id="AB017061">
    <property type="protein sequence ID" value="BAB10324.1"/>
    <property type="molecule type" value="Genomic_DNA"/>
</dbReference>
<dbReference type="EMBL" id="CP002688">
    <property type="protein sequence ID" value="AED95754.1"/>
    <property type="molecule type" value="Genomic_DNA"/>
</dbReference>
<dbReference type="EMBL" id="CP002688">
    <property type="protein sequence ID" value="AED95755.1"/>
    <property type="molecule type" value="Genomic_DNA"/>
</dbReference>
<dbReference type="EMBL" id="AK117938">
    <property type="protein sequence ID" value="BAC42576.2"/>
    <property type="molecule type" value="mRNA"/>
</dbReference>
<dbReference type="EMBL" id="BT029493">
    <property type="protein sequence ID" value="ABL66750.1"/>
    <property type="molecule type" value="mRNA"/>
</dbReference>
<dbReference type="RefSeq" id="NP_001119398.1">
    <molecule id="Q9FI70-1"/>
    <property type="nucleotide sequence ID" value="NM_001125926.2"/>
</dbReference>
<dbReference type="RefSeq" id="NP_199711.2">
    <molecule id="Q9FI70-2"/>
    <property type="nucleotide sequence ID" value="NM_124277.2"/>
</dbReference>
<dbReference type="SMR" id="Q9FI70"/>
<dbReference type="BioGRID" id="20205">
    <property type="interactions" value="9"/>
</dbReference>
<dbReference type="IntAct" id="Q9FI70">
    <property type="interactions" value="10"/>
</dbReference>
<dbReference type="STRING" id="3702.Q9FI70"/>
<dbReference type="PaxDb" id="3702-AT5G49000.2"/>
<dbReference type="EnsemblPlants" id="AT5G49000.1">
    <molecule id="Q9FI70-2"/>
    <property type="protein sequence ID" value="AT5G49000.1"/>
    <property type="gene ID" value="AT5G49000"/>
</dbReference>
<dbReference type="EnsemblPlants" id="AT5G49000.2">
    <molecule id="Q9FI70-1"/>
    <property type="protein sequence ID" value="AT5G49000.2"/>
    <property type="gene ID" value="AT5G49000"/>
</dbReference>
<dbReference type="GeneID" id="834959"/>
<dbReference type="Gramene" id="AT5G49000.1">
    <molecule id="Q9FI70-2"/>
    <property type="protein sequence ID" value="AT5G49000.1"/>
    <property type="gene ID" value="AT5G49000"/>
</dbReference>
<dbReference type="Gramene" id="AT5G49000.2">
    <molecule id="Q9FI70-1"/>
    <property type="protein sequence ID" value="AT5G49000.2"/>
    <property type="gene ID" value="AT5G49000"/>
</dbReference>
<dbReference type="KEGG" id="ath:AT5G49000"/>
<dbReference type="Araport" id="AT5G49000"/>
<dbReference type="TAIR" id="AT5G49000"/>
<dbReference type="eggNOG" id="KOG1072">
    <property type="taxonomic scope" value="Eukaryota"/>
</dbReference>
<dbReference type="HOGENOM" id="CLU_032521_1_2_1"/>
<dbReference type="InParanoid" id="Q9FI70"/>
<dbReference type="OMA" id="CERWIEK"/>
<dbReference type="PhylomeDB" id="Q9FI70"/>
<dbReference type="PRO" id="PR:Q9FI70"/>
<dbReference type="Proteomes" id="UP000006548">
    <property type="component" value="Chromosome 5"/>
</dbReference>
<dbReference type="ExpressionAtlas" id="Q9FI70">
    <property type="expression patterns" value="baseline and differential"/>
</dbReference>
<dbReference type="CDD" id="cd22152">
    <property type="entry name" value="F-box_AtAFR-like"/>
    <property type="match status" value="1"/>
</dbReference>
<dbReference type="Gene3D" id="2.120.10.80">
    <property type="entry name" value="Kelch-type beta propeller"/>
    <property type="match status" value="1"/>
</dbReference>
<dbReference type="InterPro" id="IPR036047">
    <property type="entry name" value="F-box-like_dom_sf"/>
</dbReference>
<dbReference type="InterPro" id="IPR050354">
    <property type="entry name" value="F-box/kelch-repeat_ARATH"/>
</dbReference>
<dbReference type="InterPro" id="IPR001810">
    <property type="entry name" value="F-box_dom"/>
</dbReference>
<dbReference type="InterPro" id="IPR015915">
    <property type="entry name" value="Kelch-typ_b-propeller"/>
</dbReference>
<dbReference type="InterPro" id="IPR006652">
    <property type="entry name" value="Kelch_1"/>
</dbReference>
<dbReference type="PANTHER" id="PTHR24414">
    <property type="entry name" value="F-BOX/KELCH-REPEAT PROTEIN SKIP4"/>
    <property type="match status" value="1"/>
</dbReference>
<dbReference type="PANTHER" id="PTHR24414:SF184">
    <property type="entry name" value="GALACTOSE OXIDASE_KELCH REPEAT SUPERFAMILY PROTEIN"/>
    <property type="match status" value="1"/>
</dbReference>
<dbReference type="Pfam" id="PF00646">
    <property type="entry name" value="F-box"/>
    <property type="match status" value="1"/>
</dbReference>
<dbReference type="Pfam" id="PF25210">
    <property type="entry name" value="Kelch_FKB95"/>
    <property type="match status" value="1"/>
</dbReference>
<dbReference type="SMART" id="SM00256">
    <property type="entry name" value="FBOX"/>
    <property type="match status" value="1"/>
</dbReference>
<dbReference type="SMART" id="SM00612">
    <property type="entry name" value="Kelch"/>
    <property type="match status" value="2"/>
</dbReference>
<dbReference type="SUPFAM" id="SSF81383">
    <property type="entry name" value="F-box domain"/>
    <property type="match status" value="1"/>
</dbReference>
<dbReference type="SUPFAM" id="SSF117281">
    <property type="entry name" value="Kelch motif"/>
    <property type="match status" value="1"/>
</dbReference>
<evidence type="ECO:0000256" key="1">
    <source>
        <dbReference type="SAM" id="MobiDB-lite"/>
    </source>
</evidence>
<evidence type="ECO:0000303" key="2">
    <source>
    </source>
</evidence>
<evidence type="ECO:0000305" key="3"/>
<feature type="chain" id="PRO_0000283277" description="F-box/kelch-repeat protein At5g49000">
    <location>
        <begin position="1"/>
        <end position="372"/>
    </location>
</feature>
<feature type="domain" description="F-box">
    <location>
        <begin position="19"/>
        <end position="65"/>
    </location>
</feature>
<feature type="repeat" description="Kelch 1">
    <location>
        <begin position="131"/>
        <end position="177"/>
    </location>
</feature>
<feature type="repeat" description="Kelch 2">
    <location>
        <begin position="179"/>
        <end position="224"/>
    </location>
</feature>
<feature type="repeat" description="Kelch 3">
    <location>
        <begin position="226"/>
        <end position="271"/>
    </location>
</feature>
<feature type="repeat" description="Kelch 4">
    <location>
        <begin position="273"/>
        <end position="312"/>
    </location>
</feature>
<feature type="region of interest" description="Disordered" evidence="1">
    <location>
        <begin position="1"/>
        <end position="24"/>
    </location>
</feature>
<feature type="compositionally biased region" description="Basic residues" evidence="1">
    <location>
        <begin position="1"/>
        <end position="11"/>
    </location>
</feature>
<feature type="splice variant" id="VSP_024432" description="In isoform 2." evidence="2">
    <location>
        <begin position="110"/>
        <end position="153"/>
    </location>
</feature>
<feature type="sequence conflict" description="In Ref. 3; BAC42576." evidence="3" ref="3">
    <original>F</original>
    <variation>L</variation>
    <location>
        <position position="206"/>
    </location>
</feature>
<gene>
    <name type="ordered locus">At5g49000</name>
    <name type="ORF">K19E20.13</name>
</gene>
<comment type="alternative products">
    <event type="alternative splicing"/>
    <isoform>
        <id>Q9FI70-1</id>
        <name>1</name>
        <sequence type="displayed"/>
    </isoform>
    <isoform>
        <id>Q9FI70-2</id>
        <name>2</name>
        <sequence type="described" ref="VSP_024432"/>
    </isoform>
</comment>
<accession>Q9FI70</accession>
<accession>Q8GY04</accession>
<sequence>MSSPERKRKKRSLEPSPESTPNPSLPDDLIVSILARVSRLYYPILSLVSKSSRTLVTSPELYKTRSFFNRTESCLYVCLDFPPDPNPRWFTLYRKPNQNITEKTKNSSGFVLAPIPNHHSHSSSIVAIGSNIYAIGGSIENAPSSKVSILDCRSHTWHEAPSMRMKRNYPAANVVDGKIYVAGGLEEFDSSKWMEVFDIKTQTWEFVLSPLAERFIYRSLVIEGEIYIFGDKVVTYKPKEDRWGGVGEHQSMDLGLFFHSYCVIDNVLYCYRPGGIKWYESEKRSWRKLRGLKGLSKLASSCVKLADYGGKMALLWDKYIPCSGNKSHSISCAVVSLERCKNQGIRGKVEWFDDMLTVPSSYNFVGALAATL</sequence>